<proteinExistence type="inferred from homology"/>
<feature type="chain" id="PRO_1000082035" description="Succinate--CoA ligase [ADP-forming] subunit beta">
    <location>
        <begin position="1"/>
        <end position="388"/>
    </location>
</feature>
<feature type="domain" description="ATP-grasp" evidence="1">
    <location>
        <begin position="9"/>
        <end position="244"/>
    </location>
</feature>
<feature type="binding site" evidence="1">
    <location>
        <position position="46"/>
    </location>
    <ligand>
        <name>ATP</name>
        <dbReference type="ChEBI" id="CHEBI:30616"/>
    </ligand>
</feature>
<feature type="binding site" evidence="1">
    <location>
        <begin position="53"/>
        <end position="55"/>
    </location>
    <ligand>
        <name>ATP</name>
        <dbReference type="ChEBI" id="CHEBI:30616"/>
    </ligand>
</feature>
<feature type="binding site" evidence="1">
    <location>
        <position position="99"/>
    </location>
    <ligand>
        <name>ATP</name>
        <dbReference type="ChEBI" id="CHEBI:30616"/>
    </ligand>
</feature>
<feature type="binding site" evidence="1">
    <location>
        <position position="102"/>
    </location>
    <ligand>
        <name>ATP</name>
        <dbReference type="ChEBI" id="CHEBI:30616"/>
    </ligand>
</feature>
<feature type="binding site" evidence="1">
    <location>
        <position position="107"/>
    </location>
    <ligand>
        <name>ATP</name>
        <dbReference type="ChEBI" id="CHEBI:30616"/>
    </ligand>
</feature>
<feature type="binding site" evidence="1">
    <location>
        <position position="199"/>
    </location>
    <ligand>
        <name>Mg(2+)</name>
        <dbReference type="ChEBI" id="CHEBI:18420"/>
    </ligand>
</feature>
<feature type="binding site" evidence="1">
    <location>
        <position position="213"/>
    </location>
    <ligand>
        <name>Mg(2+)</name>
        <dbReference type="ChEBI" id="CHEBI:18420"/>
    </ligand>
</feature>
<feature type="binding site" evidence="1">
    <location>
        <position position="264"/>
    </location>
    <ligand>
        <name>substrate</name>
        <note>ligand shared with subunit alpha</note>
    </ligand>
</feature>
<feature type="binding site" evidence="1">
    <location>
        <begin position="321"/>
        <end position="323"/>
    </location>
    <ligand>
        <name>substrate</name>
        <note>ligand shared with subunit alpha</note>
    </ligand>
</feature>
<reference key="1">
    <citation type="submission" date="2006-05" db="EMBL/GenBank/DDBJ databases">
        <title>Complete sequence of chromosome 1 of Burkholderia cenocepacia AU 1054.</title>
        <authorList>
            <consortium name="US DOE Joint Genome Institute"/>
            <person name="Copeland A."/>
            <person name="Lucas S."/>
            <person name="Lapidus A."/>
            <person name="Barry K."/>
            <person name="Detter J.C."/>
            <person name="Glavina del Rio T."/>
            <person name="Hammon N."/>
            <person name="Israni S."/>
            <person name="Dalin E."/>
            <person name="Tice H."/>
            <person name="Pitluck S."/>
            <person name="Chain P."/>
            <person name="Malfatti S."/>
            <person name="Shin M."/>
            <person name="Vergez L."/>
            <person name="Schmutz J."/>
            <person name="Larimer F."/>
            <person name="Land M."/>
            <person name="Hauser L."/>
            <person name="Kyrpides N."/>
            <person name="Lykidis A."/>
            <person name="LiPuma J.J."/>
            <person name="Konstantinidis K."/>
            <person name="Tiedje J.M."/>
            <person name="Richardson P."/>
        </authorList>
    </citation>
    <scope>NUCLEOTIDE SEQUENCE [LARGE SCALE GENOMIC DNA]</scope>
    <source>
        <strain>AU 1054</strain>
    </source>
</reference>
<name>SUCC_BURO1</name>
<dbReference type="EC" id="6.2.1.5" evidence="1"/>
<dbReference type="EMBL" id="CP000378">
    <property type="protein sequence ID" value="ABF76939.1"/>
    <property type="molecule type" value="Genomic_DNA"/>
</dbReference>
<dbReference type="SMR" id="Q1BTW6"/>
<dbReference type="HOGENOM" id="CLU_037430_0_2_4"/>
<dbReference type="UniPathway" id="UPA00223">
    <property type="reaction ID" value="UER00999"/>
</dbReference>
<dbReference type="GO" id="GO:0005829">
    <property type="term" value="C:cytosol"/>
    <property type="evidence" value="ECO:0007669"/>
    <property type="project" value="TreeGrafter"/>
</dbReference>
<dbReference type="GO" id="GO:0042709">
    <property type="term" value="C:succinate-CoA ligase complex"/>
    <property type="evidence" value="ECO:0007669"/>
    <property type="project" value="TreeGrafter"/>
</dbReference>
<dbReference type="GO" id="GO:0005524">
    <property type="term" value="F:ATP binding"/>
    <property type="evidence" value="ECO:0007669"/>
    <property type="project" value="UniProtKB-UniRule"/>
</dbReference>
<dbReference type="GO" id="GO:0000287">
    <property type="term" value="F:magnesium ion binding"/>
    <property type="evidence" value="ECO:0007669"/>
    <property type="project" value="UniProtKB-UniRule"/>
</dbReference>
<dbReference type="GO" id="GO:0004775">
    <property type="term" value="F:succinate-CoA ligase (ADP-forming) activity"/>
    <property type="evidence" value="ECO:0007669"/>
    <property type="project" value="UniProtKB-UniRule"/>
</dbReference>
<dbReference type="GO" id="GO:0004776">
    <property type="term" value="F:succinate-CoA ligase (GDP-forming) activity"/>
    <property type="evidence" value="ECO:0007669"/>
    <property type="project" value="RHEA"/>
</dbReference>
<dbReference type="GO" id="GO:0006104">
    <property type="term" value="P:succinyl-CoA metabolic process"/>
    <property type="evidence" value="ECO:0007669"/>
    <property type="project" value="TreeGrafter"/>
</dbReference>
<dbReference type="GO" id="GO:0006099">
    <property type="term" value="P:tricarboxylic acid cycle"/>
    <property type="evidence" value="ECO:0007669"/>
    <property type="project" value="UniProtKB-UniRule"/>
</dbReference>
<dbReference type="FunFam" id="3.30.1490.20:FF:000002">
    <property type="entry name" value="Succinate--CoA ligase [ADP-forming] subunit beta"/>
    <property type="match status" value="1"/>
</dbReference>
<dbReference type="FunFam" id="3.30.470.20:FF:000002">
    <property type="entry name" value="Succinate--CoA ligase [ADP-forming] subunit beta"/>
    <property type="match status" value="1"/>
</dbReference>
<dbReference type="FunFam" id="3.40.50.261:FF:000001">
    <property type="entry name" value="Succinate--CoA ligase [ADP-forming] subunit beta"/>
    <property type="match status" value="1"/>
</dbReference>
<dbReference type="Gene3D" id="3.30.1490.20">
    <property type="entry name" value="ATP-grasp fold, A domain"/>
    <property type="match status" value="1"/>
</dbReference>
<dbReference type="Gene3D" id="3.30.470.20">
    <property type="entry name" value="ATP-grasp fold, B domain"/>
    <property type="match status" value="1"/>
</dbReference>
<dbReference type="Gene3D" id="3.40.50.261">
    <property type="entry name" value="Succinyl-CoA synthetase domains"/>
    <property type="match status" value="1"/>
</dbReference>
<dbReference type="HAMAP" id="MF_00558">
    <property type="entry name" value="Succ_CoA_beta"/>
    <property type="match status" value="1"/>
</dbReference>
<dbReference type="InterPro" id="IPR011761">
    <property type="entry name" value="ATP-grasp"/>
</dbReference>
<dbReference type="InterPro" id="IPR013650">
    <property type="entry name" value="ATP-grasp_succ-CoA_synth-type"/>
</dbReference>
<dbReference type="InterPro" id="IPR013815">
    <property type="entry name" value="ATP_grasp_subdomain_1"/>
</dbReference>
<dbReference type="InterPro" id="IPR017866">
    <property type="entry name" value="Succ-CoA_synthase_bsu_CS"/>
</dbReference>
<dbReference type="InterPro" id="IPR005811">
    <property type="entry name" value="SUCC_ACL_C"/>
</dbReference>
<dbReference type="InterPro" id="IPR005809">
    <property type="entry name" value="Succ_CoA_ligase-like_bsu"/>
</dbReference>
<dbReference type="InterPro" id="IPR016102">
    <property type="entry name" value="Succinyl-CoA_synth-like"/>
</dbReference>
<dbReference type="NCBIfam" id="NF001913">
    <property type="entry name" value="PRK00696.1"/>
    <property type="match status" value="1"/>
</dbReference>
<dbReference type="NCBIfam" id="TIGR01016">
    <property type="entry name" value="sucCoAbeta"/>
    <property type="match status" value="1"/>
</dbReference>
<dbReference type="PANTHER" id="PTHR11815:SF10">
    <property type="entry name" value="SUCCINATE--COA LIGASE [GDP-FORMING] SUBUNIT BETA, MITOCHONDRIAL"/>
    <property type="match status" value="1"/>
</dbReference>
<dbReference type="PANTHER" id="PTHR11815">
    <property type="entry name" value="SUCCINYL-COA SYNTHETASE BETA CHAIN"/>
    <property type="match status" value="1"/>
</dbReference>
<dbReference type="Pfam" id="PF08442">
    <property type="entry name" value="ATP-grasp_2"/>
    <property type="match status" value="1"/>
</dbReference>
<dbReference type="Pfam" id="PF00549">
    <property type="entry name" value="Ligase_CoA"/>
    <property type="match status" value="1"/>
</dbReference>
<dbReference type="PIRSF" id="PIRSF001554">
    <property type="entry name" value="SucCS_beta"/>
    <property type="match status" value="1"/>
</dbReference>
<dbReference type="SUPFAM" id="SSF56059">
    <property type="entry name" value="Glutathione synthetase ATP-binding domain-like"/>
    <property type="match status" value="1"/>
</dbReference>
<dbReference type="SUPFAM" id="SSF52210">
    <property type="entry name" value="Succinyl-CoA synthetase domains"/>
    <property type="match status" value="1"/>
</dbReference>
<dbReference type="PROSITE" id="PS50975">
    <property type="entry name" value="ATP_GRASP"/>
    <property type="match status" value="1"/>
</dbReference>
<dbReference type="PROSITE" id="PS01217">
    <property type="entry name" value="SUCCINYL_COA_LIG_3"/>
    <property type="match status" value="1"/>
</dbReference>
<organism>
    <name type="scientific">Burkholderia orbicola (strain AU 1054)</name>
    <dbReference type="NCBI Taxonomy" id="331271"/>
    <lineage>
        <taxon>Bacteria</taxon>
        <taxon>Pseudomonadati</taxon>
        <taxon>Pseudomonadota</taxon>
        <taxon>Betaproteobacteria</taxon>
        <taxon>Burkholderiales</taxon>
        <taxon>Burkholderiaceae</taxon>
        <taxon>Burkholderia</taxon>
        <taxon>Burkholderia cepacia complex</taxon>
        <taxon>Burkholderia orbicola</taxon>
    </lineage>
</organism>
<keyword id="KW-0067">ATP-binding</keyword>
<keyword id="KW-0436">Ligase</keyword>
<keyword id="KW-0460">Magnesium</keyword>
<keyword id="KW-0479">Metal-binding</keyword>
<keyword id="KW-0547">Nucleotide-binding</keyword>
<keyword id="KW-0816">Tricarboxylic acid cycle</keyword>
<gene>
    <name evidence="1" type="primary">sucC</name>
    <name type="ordered locus">Bcen_2038</name>
</gene>
<accession>Q1BTW6</accession>
<comment type="function">
    <text evidence="1">Succinyl-CoA synthetase functions in the citric acid cycle (TCA), coupling the hydrolysis of succinyl-CoA to the synthesis of either ATP or GTP and thus represents the only step of substrate-level phosphorylation in the TCA. The beta subunit provides nucleotide specificity of the enzyme and binds the substrate succinate, while the binding sites for coenzyme A and phosphate are found in the alpha subunit.</text>
</comment>
<comment type="catalytic activity">
    <reaction evidence="1">
        <text>succinate + ATP + CoA = succinyl-CoA + ADP + phosphate</text>
        <dbReference type="Rhea" id="RHEA:17661"/>
        <dbReference type="ChEBI" id="CHEBI:30031"/>
        <dbReference type="ChEBI" id="CHEBI:30616"/>
        <dbReference type="ChEBI" id="CHEBI:43474"/>
        <dbReference type="ChEBI" id="CHEBI:57287"/>
        <dbReference type="ChEBI" id="CHEBI:57292"/>
        <dbReference type="ChEBI" id="CHEBI:456216"/>
        <dbReference type="EC" id="6.2.1.5"/>
    </reaction>
    <physiologicalReaction direction="right-to-left" evidence="1">
        <dbReference type="Rhea" id="RHEA:17663"/>
    </physiologicalReaction>
</comment>
<comment type="catalytic activity">
    <reaction evidence="1">
        <text>GTP + succinate + CoA = succinyl-CoA + GDP + phosphate</text>
        <dbReference type="Rhea" id="RHEA:22120"/>
        <dbReference type="ChEBI" id="CHEBI:30031"/>
        <dbReference type="ChEBI" id="CHEBI:37565"/>
        <dbReference type="ChEBI" id="CHEBI:43474"/>
        <dbReference type="ChEBI" id="CHEBI:57287"/>
        <dbReference type="ChEBI" id="CHEBI:57292"/>
        <dbReference type="ChEBI" id="CHEBI:58189"/>
    </reaction>
    <physiologicalReaction direction="right-to-left" evidence="1">
        <dbReference type="Rhea" id="RHEA:22122"/>
    </physiologicalReaction>
</comment>
<comment type="cofactor">
    <cofactor evidence="1">
        <name>Mg(2+)</name>
        <dbReference type="ChEBI" id="CHEBI:18420"/>
    </cofactor>
    <text evidence="1">Binds 1 Mg(2+) ion per subunit.</text>
</comment>
<comment type="pathway">
    <text evidence="1">Carbohydrate metabolism; tricarboxylic acid cycle; succinate from succinyl-CoA (ligase route): step 1/1.</text>
</comment>
<comment type="subunit">
    <text evidence="1">Heterotetramer of two alpha and two beta subunits.</text>
</comment>
<comment type="similarity">
    <text evidence="1">Belongs to the succinate/malate CoA ligase beta subunit family.</text>
</comment>
<sequence length="388" mass="41254">MKIHEYQGKEILRKFGVAVPRGKPAFSVDEAVKVAEELGGPVWVVKAQIHAGGRGKGGGVKVAKSIEQVREYANQILGMQLVTHQTGPEGQKVNRLMIEEGADIKQELYVSLVVDRISQKIVLMGSSEGGMDIEEVAEKHPELIHKVIVEPSTGLLDAQADDLAAKIGVPAASIPQARAILQGLYKAFWETDASLAEINPLNVSGDGKVTALDAKFNFDSNALFRHPEIVAYRDLDEEDPAEIEASKFDLAYISLDGNIGCLVNGAGLAMATMDTIKLFGGEPANFLDVGGGATTEKVTEAFKLMLKNPDLKAILVNIFGGIMRCDVIAEGVIAGSKAVNLNVPLVVRMKGTNEDLGKKMLADSGLPIISADSMEEAAQKVVAAAAGK</sequence>
<protein>
    <recommendedName>
        <fullName evidence="1">Succinate--CoA ligase [ADP-forming] subunit beta</fullName>
        <ecNumber evidence="1">6.2.1.5</ecNumber>
    </recommendedName>
    <alternativeName>
        <fullName evidence="1">Succinyl-CoA synthetase subunit beta</fullName>
        <shortName evidence="1">SCS-beta</shortName>
    </alternativeName>
</protein>
<evidence type="ECO:0000255" key="1">
    <source>
        <dbReference type="HAMAP-Rule" id="MF_00558"/>
    </source>
</evidence>